<keyword id="KW-0025">Alternative splicing</keyword>
<keyword id="KW-0175">Coiled coil</keyword>
<keyword id="KW-0333">Golgi apparatus</keyword>
<keyword id="KW-0472">Membrane</keyword>
<keyword id="KW-0597">Phosphoprotein</keyword>
<keyword id="KW-1185">Reference proteome</keyword>
<keyword id="KW-0812">Transmembrane</keyword>
<keyword id="KW-1133">Transmembrane helix</keyword>
<gene>
    <name type="primary">Sybu</name>
    <name type="synonym">Golsyn</name>
    <name type="synonym">Kiaa1472</name>
</gene>
<proteinExistence type="evidence at protein level"/>
<organism>
    <name type="scientific">Mus musculus</name>
    <name type="common">Mouse</name>
    <dbReference type="NCBI Taxonomy" id="10090"/>
    <lineage>
        <taxon>Eukaryota</taxon>
        <taxon>Metazoa</taxon>
        <taxon>Chordata</taxon>
        <taxon>Craniata</taxon>
        <taxon>Vertebrata</taxon>
        <taxon>Euteleostomi</taxon>
        <taxon>Mammalia</taxon>
        <taxon>Eutheria</taxon>
        <taxon>Euarchontoglires</taxon>
        <taxon>Glires</taxon>
        <taxon>Rodentia</taxon>
        <taxon>Myomorpha</taxon>
        <taxon>Muroidea</taxon>
        <taxon>Muridae</taxon>
        <taxon>Murinae</taxon>
        <taxon>Mus</taxon>
        <taxon>Mus</taxon>
    </lineage>
</organism>
<protein>
    <recommendedName>
        <fullName>Syntabulin</fullName>
    </recommendedName>
    <alternativeName>
        <fullName>Golgi-localized syntaphilin-related protein</fullName>
        <shortName>m-Golsyn</shortName>
    </alternativeName>
    <alternativeName>
        <fullName>Syntaxin-1-binding protein</fullName>
    </alternativeName>
</protein>
<accession>Q8BHS8</accession>
<accession>Q3TQN7</accession>
<accession>Q401F3</accession>
<accession>Q401F4</accession>
<accession>Q571C1</accession>
<accession>Q6P1J2</accession>
<accession>Q80XH0</accession>
<accession>Q8BHS7</accession>
<accession>Q8BI27</accession>
<comment type="function">
    <text evidence="1">Part of a kinesin motor-adapter complex that is critical for the anterograde axonal transport of active zone components and contributes to activity-dependent presynaptic assembly during neuronal development.</text>
</comment>
<comment type="subunit">
    <text evidence="1">Interacts with STX1A and KIF5B.</text>
</comment>
<comment type="subcellular location">
    <subcellularLocation>
        <location evidence="1">Golgi apparatus membrane</location>
        <topology evidence="1">Single-pass membrane protein</topology>
    </subcellularLocation>
    <text evidence="1">Colocalizes with syntaxin vesicles along microtubules in neuronal processes.</text>
</comment>
<comment type="alternative products">
    <event type="alternative splicing"/>
    <isoform>
        <id>Q8BHS8-1</id>
        <name>1</name>
        <sequence type="displayed"/>
    </isoform>
    <isoform>
        <id>Q8BHS8-2</id>
        <name>2</name>
        <sequence type="described" ref="VSP_019727"/>
    </isoform>
    <isoform>
        <id>Q8BHS8-3</id>
        <name>3</name>
        <name>Golsyn B</name>
        <sequence type="described" ref="VSP_019725 VSP_019728"/>
    </isoform>
    <isoform>
        <id>Q8BHS8-4</id>
        <name>4</name>
        <name>Golsyn A</name>
        <sequence type="described" ref="VSP_019726"/>
    </isoform>
    <isoform>
        <id>Q8BHS8-5</id>
        <name>5</name>
        <sequence type="described" ref="VSP_019724"/>
    </isoform>
    <isoform>
        <id>Q8BHS8-6</id>
        <name>6</name>
        <sequence type="described" ref="VSP_019723"/>
    </isoform>
</comment>
<comment type="sequence caution" evidence="8">
    <conflict type="erroneous initiation">
        <sequence resource="EMBL-CDS" id="BAD90193"/>
    </conflict>
</comment>
<sequence length="665" mass="73024">MGPLRESKKEQRVQHQEKEISRSRIPRLILRPHRPQQQQQQQNKVSPASESPFSEEESREFNPSSSGRSARTISSNSFCSDDTGCPSSQSVSPVKTPSDTGHSPIGFCPGSDEDFTRKKCRIGMVGEGSIQSARHKKEPKGGIIKPGSEADFSSSSSTGSISAPEVHMSTTGNKRASFSRNRGPHGRSNGASSHKSGSSPPSPREKDLVSMLCRNPLSPSNIHPSYAPSSPSSSNSGSYKGSDCSPVMRRSGRYMSCGENHGVKPPNPEQYLTPLQQKEVTVRHLRTKLKESERRLHERESEIMELKSQLARMREDWIEEECHRVEAQLALKEARKEIKQLKQVIETMRSSLADKDKGIQKYFVDINIQNKKLESLLQSMEMAHNSSLRDELCLDFSFDSPEKSLPLSSTFDKLPDGLSLEEQITEEGADSELLVGDSMAEGTDLLDEMVTATTTESSGLEFVHSTPGPQALKALPLVSHEEGIAVMEQAVQTDVVPFSPAISELIQSVLKLQDYCPTSSASPDESGADSMESFSESISALMLDLTPRSPNSAILLSPVEIPFSKGAMEAHANRLMRELDFAAYTEERLDSVLSLSQGSVVRQYWSSNFLVDLLAVAAPVVPTVLWAFSTQRGGTDPVYNIGALLRGCCVVALHSLRRTAFHMKT</sequence>
<reference key="1">
    <citation type="journal article" date="2005" name="Gene">
        <title>Molecular cloning and characterization of gene for Golgi-localized syntaphilin-related protein on human chromosome 8q23.</title>
        <authorList>
            <person name="Funakoshi E."/>
            <person name="Nakagawa K.-Y."/>
            <person name="Hamano A."/>
            <person name="Hori T."/>
            <person name="Shimizu A."/>
            <person name="Asakawa S."/>
            <person name="Shimizu N."/>
            <person name="Ito F."/>
        </authorList>
    </citation>
    <scope>NUCLEOTIDE SEQUENCE [MRNA] (ISOFORMS 1; 3 AND 4)</scope>
    <source>
        <tissue>Brain</tissue>
    </source>
</reference>
<reference key="2">
    <citation type="journal article" date="2005" name="Science">
        <title>The transcriptional landscape of the mammalian genome.</title>
        <authorList>
            <person name="Carninci P."/>
            <person name="Kasukawa T."/>
            <person name="Katayama S."/>
            <person name="Gough J."/>
            <person name="Frith M.C."/>
            <person name="Maeda N."/>
            <person name="Oyama R."/>
            <person name="Ravasi T."/>
            <person name="Lenhard B."/>
            <person name="Wells C."/>
            <person name="Kodzius R."/>
            <person name="Shimokawa K."/>
            <person name="Bajic V.B."/>
            <person name="Brenner S.E."/>
            <person name="Batalov S."/>
            <person name="Forrest A.R."/>
            <person name="Zavolan M."/>
            <person name="Davis M.J."/>
            <person name="Wilming L.G."/>
            <person name="Aidinis V."/>
            <person name="Allen J.E."/>
            <person name="Ambesi-Impiombato A."/>
            <person name="Apweiler R."/>
            <person name="Aturaliya R.N."/>
            <person name="Bailey T.L."/>
            <person name="Bansal M."/>
            <person name="Baxter L."/>
            <person name="Beisel K.W."/>
            <person name="Bersano T."/>
            <person name="Bono H."/>
            <person name="Chalk A.M."/>
            <person name="Chiu K.P."/>
            <person name="Choudhary V."/>
            <person name="Christoffels A."/>
            <person name="Clutterbuck D.R."/>
            <person name="Crowe M.L."/>
            <person name="Dalla E."/>
            <person name="Dalrymple B.P."/>
            <person name="de Bono B."/>
            <person name="Della Gatta G."/>
            <person name="di Bernardo D."/>
            <person name="Down T."/>
            <person name="Engstrom P."/>
            <person name="Fagiolini M."/>
            <person name="Faulkner G."/>
            <person name="Fletcher C.F."/>
            <person name="Fukushima T."/>
            <person name="Furuno M."/>
            <person name="Futaki S."/>
            <person name="Gariboldi M."/>
            <person name="Georgii-Hemming P."/>
            <person name="Gingeras T.R."/>
            <person name="Gojobori T."/>
            <person name="Green R.E."/>
            <person name="Gustincich S."/>
            <person name="Harbers M."/>
            <person name="Hayashi Y."/>
            <person name="Hensch T.K."/>
            <person name="Hirokawa N."/>
            <person name="Hill D."/>
            <person name="Huminiecki L."/>
            <person name="Iacono M."/>
            <person name="Ikeo K."/>
            <person name="Iwama A."/>
            <person name="Ishikawa T."/>
            <person name="Jakt M."/>
            <person name="Kanapin A."/>
            <person name="Katoh M."/>
            <person name="Kawasawa Y."/>
            <person name="Kelso J."/>
            <person name="Kitamura H."/>
            <person name="Kitano H."/>
            <person name="Kollias G."/>
            <person name="Krishnan S.P."/>
            <person name="Kruger A."/>
            <person name="Kummerfeld S.K."/>
            <person name="Kurochkin I.V."/>
            <person name="Lareau L.F."/>
            <person name="Lazarevic D."/>
            <person name="Lipovich L."/>
            <person name="Liu J."/>
            <person name="Liuni S."/>
            <person name="McWilliam S."/>
            <person name="Madan Babu M."/>
            <person name="Madera M."/>
            <person name="Marchionni L."/>
            <person name="Matsuda H."/>
            <person name="Matsuzawa S."/>
            <person name="Miki H."/>
            <person name="Mignone F."/>
            <person name="Miyake S."/>
            <person name="Morris K."/>
            <person name="Mottagui-Tabar S."/>
            <person name="Mulder N."/>
            <person name="Nakano N."/>
            <person name="Nakauchi H."/>
            <person name="Ng P."/>
            <person name="Nilsson R."/>
            <person name="Nishiguchi S."/>
            <person name="Nishikawa S."/>
            <person name="Nori F."/>
            <person name="Ohara O."/>
            <person name="Okazaki Y."/>
            <person name="Orlando V."/>
            <person name="Pang K.C."/>
            <person name="Pavan W.J."/>
            <person name="Pavesi G."/>
            <person name="Pesole G."/>
            <person name="Petrovsky N."/>
            <person name="Piazza S."/>
            <person name="Reed J."/>
            <person name="Reid J.F."/>
            <person name="Ring B.Z."/>
            <person name="Ringwald M."/>
            <person name="Rost B."/>
            <person name="Ruan Y."/>
            <person name="Salzberg S.L."/>
            <person name="Sandelin A."/>
            <person name="Schneider C."/>
            <person name="Schoenbach C."/>
            <person name="Sekiguchi K."/>
            <person name="Semple C.A."/>
            <person name="Seno S."/>
            <person name="Sessa L."/>
            <person name="Sheng Y."/>
            <person name="Shibata Y."/>
            <person name="Shimada H."/>
            <person name="Shimada K."/>
            <person name="Silva D."/>
            <person name="Sinclair B."/>
            <person name="Sperling S."/>
            <person name="Stupka E."/>
            <person name="Sugiura K."/>
            <person name="Sultana R."/>
            <person name="Takenaka Y."/>
            <person name="Taki K."/>
            <person name="Tammoja K."/>
            <person name="Tan S.L."/>
            <person name="Tang S."/>
            <person name="Taylor M.S."/>
            <person name="Tegner J."/>
            <person name="Teichmann S.A."/>
            <person name="Ueda H.R."/>
            <person name="van Nimwegen E."/>
            <person name="Verardo R."/>
            <person name="Wei C.L."/>
            <person name="Yagi K."/>
            <person name="Yamanishi H."/>
            <person name="Zabarovsky E."/>
            <person name="Zhu S."/>
            <person name="Zimmer A."/>
            <person name="Hide W."/>
            <person name="Bult C."/>
            <person name="Grimmond S.M."/>
            <person name="Teasdale R.D."/>
            <person name="Liu E.T."/>
            <person name="Brusic V."/>
            <person name="Quackenbush J."/>
            <person name="Wahlestedt C."/>
            <person name="Mattick J.S."/>
            <person name="Hume D.A."/>
            <person name="Kai C."/>
            <person name="Sasaki D."/>
            <person name="Tomaru Y."/>
            <person name="Fukuda S."/>
            <person name="Kanamori-Katayama M."/>
            <person name="Suzuki M."/>
            <person name="Aoki J."/>
            <person name="Arakawa T."/>
            <person name="Iida J."/>
            <person name="Imamura K."/>
            <person name="Itoh M."/>
            <person name="Kato T."/>
            <person name="Kawaji H."/>
            <person name="Kawagashira N."/>
            <person name="Kawashima T."/>
            <person name="Kojima M."/>
            <person name="Kondo S."/>
            <person name="Konno H."/>
            <person name="Nakano K."/>
            <person name="Ninomiya N."/>
            <person name="Nishio T."/>
            <person name="Okada M."/>
            <person name="Plessy C."/>
            <person name="Shibata K."/>
            <person name="Shiraki T."/>
            <person name="Suzuki S."/>
            <person name="Tagami M."/>
            <person name="Waki K."/>
            <person name="Watahiki A."/>
            <person name="Okamura-Oho Y."/>
            <person name="Suzuki H."/>
            <person name="Kawai J."/>
            <person name="Hayashizaki Y."/>
        </authorList>
    </citation>
    <scope>NUCLEOTIDE SEQUENCE [LARGE SCALE MRNA] (ISOFORMS 1 AND 5)</scope>
    <source>
        <strain>C57BL/6J</strain>
        <tissue>Corpora quadrigemina</tissue>
        <tissue>Embryo</tissue>
        <tissue>Pituitary anterior lobe</tissue>
        <tissue>Skin</tissue>
    </source>
</reference>
<reference key="3">
    <citation type="submission" date="2005-02" db="EMBL/GenBank/DDBJ databases">
        <title>Prediction of the coding sequences of mouse homologues of KIAA gene. The complete nucleotide sequences of mouse KIAA-homologous cDNAs identified by screening of terminal sequences of cDNA clones randomly sampled from size-fractionated libraries.</title>
        <authorList>
            <person name="Okazaki N."/>
            <person name="Kikuno R.F."/>
            <person name="Ohara R."/>
            <person name="Inamoto S."/>
            <person name="Nagase T."/>
            <person name="Ohara O."/>
            <person name="Koga H."/>
        </authorList>
    </citation>
    <scope>NUCLEOTIDE SEQUENCE [LARGE SCALE MRNA]</scope>
    <source>
        <tissue>Pancreatic islet</tissue>
    </source>
</reference>
<reference key="4">
    <citation type="journal article" date="2004" name="Genome Res.">
        <title>The status, quality, and expansion of the NIH full-length cDNA project: the Mammalian Gene Collection (MGC).</title>
        <authorList>
            <consortium name="The MGC Project Team"/>
        </authorList>
    </citation>
    <scope>NUCLEOTIDE SEQUENCE [LARGE SCALE MRNA] (ISOFORMS 2 AND 6)</scope>
    <source>
        <strain>C57BL/6J</strain>
        <tissue>Eye</tissue>
        <tissue>Fetal brain</tissue>
    </source>
</reference>
<reference key="5">
    <citation type="journal article" date="2004" name="Mol. Cell. Proteomics">
        <title>Phosphoproteomic analysis of the developing mouse brain.</title>
        <authorList>
            <person name="Ballif B.A."/>
            <person name="Villen J."/>
            <person name="Beausoleil S.A."/>
            <person name="Schwartz D."/>
            <person name="Gygi S.P."/>
        </authorList>
    </citation>
    <scope>PHOSPHORYLATION [LARGE SCALE ANALYSIS] AT SER-557</scope>
    <scope>IDENTIFICATION BY MASS SPECTROMETRY [LARGE SCALE ANALYSIS]</scope>
    <source>
        <tissue>Embryonic brain</tissue>
    </source>
</reference>
<reference key="6">
    <citation type="journal article" date="2010" name="Cell">
        <title>A tissue-specific atlas of mouse protein phosphorylation and expression.</title>
        <authorList>
            <person name="Huttlin E.L."/>
            <person name="Jedrychowski M.P."/>
            <person name="Elias J.E."/>
            <person name="Goswami T."/>
            <person name="Rad R."/>
            <person name="Beausoleil S.A."/>
            <person name="Villen J."/>
            <person name="Haas W."/>
            <person name="Sowa M.E."/>
            <person name="Gygi S.P."/>
        </authorList>
    </citation>
    <scope>PHOSPHORYLATION [LARGE SCALE ANALYSIS] AT SER-111 AND SER-557</scope>
    <scope>IDENTIFICATION BY MASS SPECTROMETRY [LARGE SCALE ANALYSIS]</scope>
    <source>
        <tissue>Brain</tissue>
    </source>
</reference>
<name>SYBU_MOUSE</name>
<dbReference type="EMBL" id="AB232447">
    <property type="protein sequence ID" value="BAE19961.1"/>
    <property type="molecule type" value="mRNA"/>
</dbReference>
<dbReference type="EMBL" id="AB232448">
    <property type="protein sequence ID" value="BAE19962.1"/>
    <property type="molecule type" value="mRNA"/>
</dbReference>
<dbReference type="EMBL" id="AB232449">
    <property type="protein sequence ID" value="BAE19963.1"/>
    <property type="molecule type" value="mRNA"/>
</dbReference>
<dbReference type="EMBL" id="AK029072">
    <property type="protein sequence ID" value="BAC26277.1"/>
    <property type="molecule type" value="mRNA"/>
</dbReference>
<dbReference type="EMBL" id="AK030482">
    <property type="protein sequence ID" value="BAC26984.1"/>
    <property type="molecule type" value="mRNA"/>
</dbReference>
<dbReference type="EMBL" id="AK030720">
    <property type="protein sequence ID" value="BAC27098.1"/>
    <property type="molecule type" value="mRNA"/>
</dbReference>
<dbReference type="EMBL" id="AK163432">
    <property type="protein sequence ID" value="BAE37345.1"/>
    <property type="molecule type" value="mRNA"/>
</dbReference>
<dbReference type="EMBL" id="AK220268">
    <property type="protein sequence ID" value="BAD90193.1"/>
    <property type="status" value="ALT_INIT"/>
    <property type="molecule type" value="mRNA"/>
</dbReference>
<dbReference type="EMBL" id="BC048945">
    <property type="protein sequence ID" value="AAH48945.1"/>
    <property type="molecule type" value="mRNA"/>
</dbReference>
<dbReference type="EMBL" id="BC065045">
    <property type="protein sequence ID" value="AAH65045.1"/>
    <property type="molecule type" value="mRNA"/>
</dbReference>
<dbReference type="CCDS" id="CCDS37069.1">
    <molecule id="Q8BHS8-4"/>
</dbReference>
<dbReference type="CCDS" id="CCDS37070.1">
    <molecule id="Q8BHS8-3"/>
</dbReference>
<dbReference type="CCDS" id="CCDS37071.1">
    <molecule id="Q8BHS8-1"/>
</dbReference>
<dbReference type="CCDS" id="CCDS88763.1">
    <molecule id="Q8BHS8-2"/>
</dbReference>
<dbReference type="RefSeq" id="NP_001027899.1">
    <molecule id="Q8BHS8-3"/>
    <property type="nucleotide sequence ID" value="NM_001032727.2"/>
</dbReference>
<dbReference type="RefSeq" id="NP_001272769.1">
    <molecule id="Q8BHS8-1"/>
    <property type="nucleotide sequence ID" value="NM_001285840.1"/>
</dbReference>
<dbReference type="RefSeq" id="NP_001272770.1">
    <property type="nucleotide sequence ID" value="NM_001285841.1"/>
</dbReference>
<dbReference type="RefSeq" id="NP_001272771.1">
    <property type="nucleotide sequence ID" value="NM_001285842.1"/>
</dbReference>
<dbReference type="RefSeq" id="NP_001272772.1">
    <property type="nucleotide sequence ID" value="NM_001285843.1"/>
</dbReference>
<dbReference type="RefSeq" id="NP_001272773.1">
    <property type="nucleotide sequence ID" value="NM_001285844.1"/>
</dbReference>
<dbReference type="RefSeq" id="NP_001345511.1">
    <molecule id="Q8BHS8-2"/>
    <property type="nucleotide sequence ID" value="NM_001358582.2"/>
</dbReference>
<dbReference type="RefSeq" id="NP_001345512.1">
    <molecule id="Q8BHS8-5"/>
    <property type="nucleotide sequence ID" value="NM_001358583.1"/>
</dbReference>
<dbReference type="RefSeq" id="NP_001345513.1">
    <molecule id="Q8BHS8-5"/>
    <property type="nucleotide sequence ID" value="NM_001358584.1"/>
</dbReference>
<dbReference type="RefSeq" id="NP_001403471.1">
    <molecule id="Q8BHS8-5"/>
    <property type="nucleotide sequence ID" value="NM_001416542.1"/>
</dbReference>
<dbReference type="RefSeq" id="NP_795972.2">
    <molecule id="Q8BHS8-4"/>
    <property type="nucleotide sequence ID" value="NM_176998.5"/>
</dbReference>
<dbReference type="RefSeq" id="NP_848880.2">
    <molecule id="Q8BHS8-1"/>
    <property type="nucleotide sequence ID" value="NM_178765.4"/>
</dbReference>
<dbReference type="RefSeq" id="XP_006521135.1">
    <property type="nucleotide sequence ID" value="XM_006521072.3"/>
</dbReference>
<dbReference type="RefSeq" id="XP_006521138.1">
    <property type="nucleotide sequence ID" value="XM_006521075.3"/>
</dbReference>
<dbReference type="RefSeq" id="XP_017172155.1">
    <property type="nucleotide sequence ID" value="XM_017316666.1"/>
</dbReference>
<dbReference type="SMR" id="Q8BHS8"/>
<dbReference type="BioGRID" id="235398">
    <property type="interactions" value="1"/>
</dbReference>
<dbReference type="FunCoup" id="Q8BHS8">
    <property type="interactions" value="660"/>
</dbReference>
<dbReference type="STRING" id="10090.ENSMUSP00000087511"/>
<dbReference type="GlyGen" id="Q8BHS8">
    <property type="glycosylation" value="1 site, 1 N-linked glycan (1 site)"/>
</dbReference>
<dbReference type="iPTMnet" id="Q8BHS8"/>
<dbReference type="PhosphoSitePlus" id="Q8BHS8"/>
<dbReference type="PaxDb" id="10090-ENSMUSP00000087511"/>
<dbReference type="PeptideAtlas" id="Q8BHS8"/>
<dbReference type="ProteomicsDB" id="257509">
    <molecule id="Q8BHS8-1"/>
</dbReference>
<dbReference type="ProteomicsDB" id="257510">
    <molecule id="Q8BHS8-2"/>
</dbReference>
<dbReference type="ProteomicsDB" id="257511">
    <molecule id="Q8BHS8-3"/>
</dbReference>
<dbReference type="ProteomicsDB" id="257512">
    <molecule id="Q8BHS8-4"/>
</dbReference>
<dbReference type="ProteomicsDB" id="257513">
    <molecule id="Q8BHS8-5"/>
</dbReference>
<dbReference type="ProteomicsDB" id="257514">
    <molecule id="Q8BHS8-6"/>
</dbReference>
<dbReference type="Antibodypedia" id="42935">
    <property type="antibodies" value="24 antibodies from 13 providers"/>
</dbReference>
<dbReference type="DNASU" id="319613"/>
<dbReference type="Ensembl" id="ENSMUST00000090057.6">
    <molecule id="Q8BHS8-4"/>
    <property type="protein sequence ID" value="ENSMUSP00000087511.5"/>
    <property type="gene ID" value="ENSMUSG00000022340.16"/>
</dbReference>
<dbReference type="Ensembl" id="ENSMUST00000110267.9">
    <molecule id="Q8BHS8-1"/>
    <property type="protein sequence ID" value="ENSMUSP00000105896.2"/>
    <property type="gene ID" value="ENSMUSG00000022340.16"/>
</dbReference>
<dbReference type="Ensembl" id="ENSMUST00000110269.8">
    <molecule id="Q8BHS8-3"/>
    <property type="protein sequence ID" value="ENSMUSP00000105898.2"/>
    <property type="gene ID" value="ENSMUSG00000022340.16"/>
</dbReference>
<dbReference type="Ensembl" id="ENSMUST00000227305.2">
    <molecule id="Q8BHS8-2"/>
    <property type="protein sequence ID" value="ENSMUSP00000154372.2"/>
    <property type="gene ID" value="ENSMUSG00000022340.16"/>
</dbReference>
<dbReference type="Ensembl" id="ENSMUST00000228057.2">
    <molecule id="Q8BHS8-1"/>
    <property type="protein sequence ID" value="ENSMUSP00000153759.2"/>
    <property type="gene ID" value="ENSMUSG00000022340.16"/>
</dbReference>
<dbReference type="GeneID" id="319613"/>
<dbReference type="KEGG" id="mmu:319613"/>
<dbReference type="UCSC" id="uc007vqc.2">
    <molecule id="Q8BHS8-1"/>
    <property type="organism name" value="mouse"/>
</dbReference>
<dbReference type="UCSC" id="uc007vqf.2">
    <molecule id="Q8BHS8-2"/>
    <property type="organism name" value="mouse"/>
</dbReference>
<dbReference type="UCSC" id="uc007vqg.2">
    <molecule id="Q8BHS8-4"/>
    <property type="organism name" value="mouse"/>
</dbReference>
<dbReference type="UCSC" id="uc007vqh.2">
    <molecule id="Q8BHS8-3"/>
    <property type="organism name" value="mouse"/>
</dbReference>
<dbReference type="AGR" id="MGI:2442392"/>
<dbReference type="CTD" id="55638"/>
<dbReference type="MGI" id="MGI:2442392">
    <property type="gene designation" value="Sybu"/>
</dbReference>
<dbReference type="VEuPathDB" id="HostDB:ENSMUSG00000022340"/>
<dbReference type="eggNOG" id="ENOG502QQZ1">
    <property type="taxonomic scope" value="Eukaryota"/>
</dbReference>
<dbReference type="GeneTree" id="ENSGT00520000055634"/>
<dbReference type="HOGENOM" id="CLU_019458_0_0_1"/>
<dbReference type="InParanoid" id="Q8BHS8"/>
<dbReference type="OMA" id="EHSKRTI"/>
<dbReference type="PhylomeDB" id="Q8BHS8"/>
<dbReference type="TreeFam" id="TF332407"/>
<dbReference type="BioGRID-ORCS" id="319613">
    <property type="hits" value="3 hits in 77 CRISPR screens"/>
</dbReference>
<dbReference type="CD-CODE" id="CE726F99">
    <property type="entry name" value="Postsynaptic density"/>
</dbReference>
<dbReference type="ChiTaRS" id="Sybu">
    <property type="organism name" value="mouse"/>
</dbReference>
<dbReference type="PRO" id="PR:Q8BHS8"/>
<dbReference type="Proteomes" id="UP000000589">
    <property type="component" value="Chromosome 15"/>
</dbReference>
<dbReference type="RNAct" id="Q8BHS8">
    <property type="molecule type" value="protein"/>
</dbReference>
<dbReference type="Bgee" id="ENSMUSG00000022340">
    <property type="expression patterns" value="Expressed in cortical plate and 172 other cell types or tissues"/>
</dbReference>
<dbReference type="ExpressionAtlas" id="Q8BHS8">
    <property type="expression patterns" value="baseline and differential"/>
</dbReference>
<dbReference type="GO" id="GO:1904115">
    <property type="term" value="C:axon cytoplasm"/>
    <property type="evidence" value="ECO:0007669"/>
    <property type="project" value="GOC"/>
</dbReference>
<dbReference type="GO" id="GO:0097433">
    <property type="term" value="C:dense body"/>
    <property type="evidence" value="ECO:0000266"/>
    <property type="project" value="MGI"/>
</dbReference>
<dbReference type="GO" id="GO:0000139">
    <property type="term" value="C:Golgi membrane"/>
    <property type="evidence" value="ECO:0007669"/>
    <property type="project" value="UniProtKB-SubCell"/>
</dbReference>
<dbReference type="GO" id="GO:0005874">
    <property type="term" value="C:microtubule"/>
    <property type="evidence" value="ECO:0007669"/>
    <property type="project" value="Ensembl"/>
</dbReference>
<dbReference type="GO" id="GO:0031982">
    <property type="term" value="C:vesicle"/>
    <property type="evidence" value="ECO:0007669"/>
    <property type="project" value="Ensembl"/>
</dbReference>
<dbReference type="GO" id="GO:0008017">
    <property type="term" value="F:microtubule binding"/>
    <property type="evidence" value="ECO:0000266"/>
    <property type="project" value="MGI"/>
</dbReference>
<dbReference type="GO" id="GO:1990048">
    <property type="term" value="P:anterograde neuronal dense core vesicle transport"/>
    <property type="evidence" value="ECO:0007669"/>
    <property type="project" value="Ensembl"/>
</dbReference>
<dbReference type="GO" id="GO:0019896">
    <property type="term" value="P:axonal transport of mitochondrion"/>
    <property type="evidence" value="ECO:0007669"/>
    <property type="project" value="Ensembl"/>
</dbReference>
<dbReference type="GO" id="GO:0035774">
    <property type="term" value="P:positive regulation of insulin secretion involved in cellular response to glucose stimulus"/>
    <property type="evidence" value="ECO:0007669"/>
    <property type="project" value="Ensembl"/>
</dbReference>
<dbReference type="GO" id="GO:0061178">
    <property type="term" value="P:regulation of insulin secretion involved in cellular response to glucose stimulus"/>
    <property type="evidence" value="ECO:0000266"/>
    <property type="project" value="MGI"/>
</dbReference>
<dbReference type="GO" id="GO:0060025">
    <property type="term" value="P:regulation of synaptic activity"/>
    <property type="evidence" value="ECO:0007669"/>
    <property type="project" value="Ensembl"/>
</dbReference>
<dbReference type="GO" id="GO:0060074">
    <property type="term" value="P:synapse maturation"/>
    <property type="evidence" value="ECO:0007669"/>
    <property type="project" value="Ensembl"/>
</dbReference>
<dbReference type="InterPro" id="IPR028197">
    <property type="entry name" value="Syntaphilin/Syntabulin"/>
</dbReference>
<dbReference type="PANTHER" id="PTHR16208">
    <property type="entry name" value="MICROTUBULE-ASSOCIATED PROTEIN/SYNTAPHILIN"/>
    <property type="match status" value="1"/>
</dbReference>
<dbReference type="PANTHER" id="PTHR16208:SF4">
    <property type="entry name" value="SYNTABULIN"/>
    <property type="match status" value="1"/>
</dbReference>
<dbReference type="Pfam" id="PF15290">
    <property type="entry name" value="Syntaphilin"/>
    <property type="match status" value="1"/>
</dbReference>
<feature type="chain" id="PRO_0000245510" description="Syntabulin">
    <location>
        <begin position="1"/>
        <end position="665"/>
    </location>
</feature>
<feature type="transmembrane region" description="Helical" evidence="3">
    <location>
        <begin position="609"/>
        <end position="629"/>
    </location>
</feature>
<feature type="region of interest" description="Disordered" evidence="4">
    <location>
        <begin position="1"/>
        <end position="271"/>
    </location>
</feature>
<feature type="region of interest" description="Sufficient for interaction with KIF5B" evidence="1">
    <location>
        <begin position="2"/>
        <end position="421"/>
    </location>
</feature>
<feature type="region of interest" description="Sufficient for interaction with STX1A" evidence="1">
    <location>
        <begin position="314"/>
        <end position="421"/>
    </location>
</feature>
<feature type="coiled-coil region" evidence="3">
    <location>
        <begin position="275"/>
        <end position="357"/>
    </location>
</feature>
<feature type="compositionally biased region" description="Basic and acidic residues" evidence="4">
    <location>
        <begin position="1"/>
        <end position="22"/>
    </location>
</feature>
<feature type="compositionally biased region" description="Low complexity" evidence="4">
    <location>
        <begin position="35"/>
        <end position="52"/>
    </location>
</feature>
<feature type="compositionally biased region" description="Low complexity" evidence="4">
    <location>
        <begin position="61"/>
        <end position="77"/>
    </location>
</feature>
<feature type="compositionally biased region" description="Polar residues" evidence="4">
    <location>
        <begin position="85"/>
        <end position="101"/>
    </location>
</feature>
<feature type="compositionally biased region" description="Low complexity" evidence="4">
    <location>
        <begin position="141"/>
        <end position="162"/>
    </location>
</feature>
<feature type="compositionally biased region" description="Polar residues" evidence="4">
    <location>
        <begin position="168"/>
        <end position="180"/>
    </location>
</feature>
<feature type="compositionally biased region" description="Low complexity" evidence="4">
    <location>
        <begin position="225"/>
        <end position="245"/>
    </location>
</feature>
<feature type="modified residue" description="Phosphoserine" evidence="2">
    <location>
        <position position="54"/>
    </location>
</feature>
<feature type="modified residue" description="Phosphoserine" evidence="10">
    <location>
        <position position="111"/>
    </location>
</feature>
<feature type="modified residue" description="Phosphoserine" evidence="2">
    <location>
        <position position="400"/>
    </location>
</feature>
<feature type="modified residue" description="Phosphoserine" evidence="9 10">
    <location>
        <position position="557"/>
    </location>
</feature>
<feature type="splice variant" id="VSP_019723" description="In isoform 6." evidence="5">
    <location>
        <begin position="1"/>
        <end position="167"/>
    </location>
</feature>
<feature type="splice variant" id="VSP_019724" description="In isoform 5." evidence="7">
    <location>
        <begin position="1"/>
        <end position="123"/>
    </location>
</feature>
<feature type="splice variant" id="VSP_019725" description="In isoform 3." evidence="6">
    <location>
        <begin position="1"/>
        <end position="72"/>
    </location>
</feature>
<feature type="splice variant" id="VSP_019726" description="In isoform 4." evidence="6">
    <original>M</original>
    <variation>MRPHLPVQSLRPPATVPTCSEAPGAAVLAPEVKRPRGPERAGSCRTTCANRAGGAGGAGRGWFLQPQRKPLATRCVAGRRPSPAQASRAFGDTVWTAQWTRSAKETVPPPGRRRRRQRRRGEPAGSSEM</variation>
    <location>
        <position position="1"/>
    </location>
</feature>
<feature type="splice variant" id="VSP_019727" description="In isoform 2." evidence="5">
    <location>
        <position position="8"/>
    </location>
</feature>
<feature type="splice variant" id="VSP_019728" description="In isoform 3." evidence="6">
    <original>ISSNSFCS</original>
    <variation>MDTVCKGN</variation>
    <location>
        <begin position="73"/>
        <end position="80"/>
    </location>
</feature>
<feature type="sequence conflict" description="In Ref. 2; BAC27098." evidence="8" ref="2">
    <original>S</original>
    <variation>C</variation>
    <location>
        <position position="210"/>
    </location>
</feature>
<feature type="sequence conflict" description="In Ref. 2; BAC27098." evidence="8" ref="2">
    <original>S</original>
    <variation>T</variation>
    <location>
        <position position="458"/>
    </location>
</feature>
<feature type="sequence conflict" description="In Ref. 2; BAE37345." evidence="8" ref="2">
    <original>R</original>
    <variation>G</variation>
    <location>
        <position position="548"/>
    </location>
</feature>
<evidence type="ECO:0000250" key="1"/>
<evidence type="ECO:0000250" key="2">
    <source>
        <dbReference type="UniProtKB" id="Q9NX95"/>
    </source>
</evidence>
<evidence type="ECO:0000255" key="3"/>
<evidence type="ECO:0000256" key="4">
    <source>
        <dbReference type="SAM" id="MobiDB-lite"/>
    </source>
</evidence>
<evidence type="ECO:0000303" key="5">
    <source>
    </source>
</evidence>
<evidence type="ECO:0000303" key="6">
    <source>
    </source>
</evidence>
<evidence type="ECO:0000303" key="7">
    <source>
    </source>
</evidence>
<evidence type="ECO:0000305" key="8"/>
<evidence type="ECO:0007744" key="9">
    <source>
    </source>
</evidence>
<evidence type="ECO:0007744" key="10">
    <source>
    </source>
</evidence>